<protein>
    <recommendedName>
        <fullName evidence="1">Small ribosomal subunit protein uS13</fullName>
    </recommendedName>
    <alternativeName>
        <fullName evidence="3">30S ribosomal protein S13</fullName>
    </alternativeName>
</protein>
<reference key="1">
    <citation type="journal article" date="2005" name="PLoS Genet.">
        <title>Life in hot carbon monoxide: the complete genome sequence of Carboxydothermus hydrogenoformans Z-2901.</title>
        <authorList>
            <person name="Wu M."/>
            <person name="Ren Q."/>
            <person name="Durkin A.S."/>
            <person name="Daugherty S.C."/>
            <person name="Brinkac L.M."/>
            <person name="Dodson R.J."/>
            <person name="Madupu R."/>
            <person name="Sullivan S.A."/>
            <person name="Kolonay J.F."/>
            <person name="Nelson W.C."/>
            <person name="Tallon L.J."/>
            <person name="Jones K.M."/>
            <person name="Ulrich L.E."/>
            <person name="Gonzalez J.M."/>
            <person name="Zhulin I.B."/>
            <person name="Robb F.T."/>
            <person name="Eisen J.A."/>
        </authorList>
    </citation>
    <scope>NUCLEOTIDE SEQUENCE [LARGE SCALE GENOMIC DNA]</scope>
    <source>
        <strain>ATCC BAA-161 / DSM 6008 / Z-2901</strain>
    </source>
</reference>
<name>RS13_CARHZ</name>
<evidence type="ECO:0000255" key="1">
    <source>
        <dbReference type="HAMAP-Rule" id="MF_01315"/>
    </source>
</evidence>
<evidence type="ECO:0000256" key="2">
    <source>
        <dbReference type="SAM" id="MobiDB-lite"/>
    </source>
</evidence>
<evidence type="ECO:0000305" key="3"/>
<accession>Q3A9U1</accession>
<keyword id="KW-1185">Reference proteome</keyword>
<keyword id="KW-0687">Ribonucleoprotein</keyword>
<keyword id="KW-0689">Ribosomal protein</keyword>
<keyword id="KW-0694">RNA-binding</keyword>
<keyword id="KW-0699">rRNA-binding</keyword>
<keyword id="KW-0820">tRNA-binding</keyword>
<dbReference type="EMBL" id="CP000141">
    <property type="protein sequence ID" value="ABB14022.1"/>
    <property type="molecule type" value="Genomic_DNA"/>
</dbReference>
<dbReference type="RefSeq" id="WP_011345166.1">
    <property type="nucleotide sequence ID" value="NC_007503.1"/>
</dbReference>
<dbReference type="SMR" id="Q3A9U1"/>
<dbReference type="FunCoup" id="Q3A9U1">
    <property type="interactions" value="463"/>
</dbReference>
<dbReference type="STRING" id="246194.CHY_2284"/>
<dbReference type="KEGG" id="chy:CHY_2284"/>
<dbReference type="eggNOG" id="COG0099">
    <property type="taxonomic scope" value="Bacteria"/>
</dbReference>
<dbReference type="HOGENOM" id="CLU_103849_1_2_9"/>
<dbReference type="InParanoid" id="Q3A9U1"/>
<dbReference type="OrthoDB" id="9803610at2"/>
<dbReference type="Proteomes" id="UP000002706">
    <property type="component" value="Chromosome"/>
</dbReference>
<dbReference type="GO" id="GO:0005829">
    <property type="term" value="C:cytosol"/>
    <property type="evidence" value="ECO:0007669"/>
    <property type="project" value="TreeGrafter"/>
</dbReference>
<dbReference type="GO" id="GO:0015935">
    <property type="term" value="C:small ribosomal subunit"/>
    <property type="evidence" value="ECO:0007669"/>
    <property type="project" value="TreeGrafter"/>
</dbReference>
<dbReference type="GO" id="GO:0019843">
    <property type="term" value="F:rRNA binding"/>
    <property type="evidence" value="ECO:0007669"/>
    <property type="project" value="UniProtKB-UniRule"/>
</dbReference>
<dbReference type="GO" id="GO:0003735">
    <property type="term" value="F:structural constituent of ribosome"/>
    <property type="evidence" value="ECO:0007669"/>
    <property type="project" value="InterPro"/>
</dbReference>
<dbReference type="GO" id="GO:0000049">
    <property type="term" value="F:tRNA binding"/>
    <property type="evidence" value="ECO:0007669"/>
    <property type="project" value="UniProtKB-UniRule"/>
</dbReference>
<dbReference type="GO" id="GO:0006412">
    <property type="term" value="P:translation"/>
    <property type="evidence" value="ECO:0007669"/>
    <property type="project" value="UniProtKB-UniRule"/>
</dbReference>
<dbReference type="FunFam" id="1.10.8.50:FF:000001">
    <property type="entry name" value="30S ribosomal protein S13"/>
    <property type="match status" value="1"/>
</dbReference>
<dbReference type="FunFam" id="4.10.910.10:FF:000001">
    <property type="entry name" value="30S ribosomal protein S13"/>
    <property type="match status" value="1"/>
</dbReference>
<dbReference type="Gene3D" id="1.10.8.50">
    <property type="match status" value="1"/>
</dbReference>
<dbReference type="Gene3D" id="4.10.910.10">
    <property type="entry name" value="30s ribosomal protein s13, domain 2"/>
    <property type="match status" value="1"/>
</dbReference>
<dbReference type="HAMAP" id="MF_01315">
    <property type="entry name" value="Ribosomal_uS13"/>
    <property type="match status" value="1"/>
</dbReference>
<dbReference type="InterPro" id="IPR027437">
    <property type="entry name" value="Rbsml_uS13_C"/>
</dbReference>
<dbReference type="InterPro" id="IPR001892">
    <property type="entry name" value="Ribosomal_uS13"/>
</dbReference>
<dbReference type="InterPro" id="IPR010979">
    <property type="entry name" value="Ribosomal_uS13-like_H2TH"/>
</dbReference>
<dbReference type="InterPro" id="IPR019980">
    <property type="entry name" value="Ribosomal_uS13_bac-type"/>
</dbReference>
<dbReference type="InterPro" id="IPR018269">
    <property type="entry name" value="Ribosomal_uS13_CS"/>
</dbReference>
<dbReference type="NCBIfam" id="TIGR03631">
    <property type="entry name" value="uS13_bact"/>
    <property type="match status" value="1"/>
</dbReference>
<dbReference type="PANTHER" id="PTHR10871">
    <property type="entry name" value="30S RIBOSOMAL PROTEIN S13/40S RIBOSOMAL PROTEIN S18"/>
    <property type="match status" value="1"/>
</dbReference>
<dbReference type="PANTHER" id="PTHR10871:SF1">
    <property type="entry name" value="SMALL RIBOSOMAL SUBUNIT PROTEIN US13M"/>
    <property type="match status" value="1"/>
</dbReference>
<dbReference type="Pfam" id="PF00416">
    <property type="entry name" value="Ribosomal_S13"/>
    <property type="match status" value="1"/>
</dbReference>
<dbReference type="PIRSF" id="PIRSF002134">
    <property type="entry name" value="Ribosomal_S13"/>
    <property type="match status" value="1"/>
</dbReference>
<dbReference type="SUPFAM" id="SSF46946">
    <property type="entry name" value="S13-like H2TH domain"/>
    <property type="match status" value="1"/>
</dbReference>
<dbReference type="PROSITE" id="PS00646">
    <property type="entry name" value="RIBOSOMAL_S13_1"/>
    <property type="match status" value="1"/>
</dbReference>
<dbReference type="PROSITE" id="PS50159">
    <property type="entry name" value="RIBOSOMAL_S13_2"/>
    <property type="match status" value="1"/>
</dbReference>
<organism>
    <name type="scientific">Carboxydothermus hydrogenoformans (strain ATCC BAA-161 / DSM 6008 / Z-2901)</name>
    <dbReference type="NCBI Taxonomy" id="246194"/>
    <lineage>
        <taxon>Bacteria</taxon>
        <taxon>Bacillati</taxon>
        <taxon>Bacillota</taxon>
        <taxon>Clostridia</taxon>
        <taxon>Thermoanaerobacterales</taxon>
        <taxon>Thermoanaerobacteraceae</taxon>
        <taxon>Carboxydothermus</taxon>
    </lineage>
</organism>
<gene>
    <name evidence="1" type="primary">rpsM</name>
    <name type="ordered locus">CHY_2284</name>
</gene>
<proteinExistence type="inferred from homology"/>
<feature type="chain" id="PRO_0000230489" description="Small ribosomal subunit protein uS13">
    <location>
        <begin position="1"/>
        <end position="123"/>
    </location>
</feature>
<feature type="region of interest" description="Disordered" evidence="2">
    <location>
        <begin position="99"/>
        <end position="123"/>
    </location>
</feature>
<sequence>MARIAGVDLPRDKRVEIALTYIYGIGRPTANVILKKTGINPDTRVKDLTEEEVAKLRDEIEKNYKVEGELRREVALNIKRLIEIGCYRGIRHRKGLPVRGQRTRTNARTRKGPRRTVGVKRKK</sequence>
<comment type="function">
    <text evidence="1">Located at the top of the head of the 30S subunit, it contacts several helices of the 16S rRNA. In the 70S ribosome it contacts the 23S rRNA (bridge B1a) and protein L5 of the 50S subunit (bridge B1b), connecting the 2 subunits; these bridges are implicated in subunit movement. Contacts the tRNAs in the A and P-sites.</text>
</comment>
<comment type="subunit">
    <text evidence="1">Part of the 30S ribosomal subunit. Forms a loose heterodimer with protein S19. Forms two bridges to the 50S subunit in the 70S ribosome.</text>
</comment>
<comment type="similarity">
    <text evidence="1">Belongs to the universal ribosomal protein uS13 family.</text>
</comment>